<gene>
    <name evidence="2" type="primary">scpY</name>
    <name type="ORF">LY89DRAFT_579296</name>
</gene>
<dbReference type="EC" id="5.-.-.-" evidence="1"/>
<dbReference type="EMBL" id="KQ947409">
    <property type="protein sequence ID" value="KUJ20448.1"/>
    <property type="molecule type" value="Genomic_DNA"/>
</dbReference>
<dbReference type="RefSeq" id="XP_018074803.1">
    <property type="nucleotide sequence ID" value="XM_018208995.1"/>
</dbReference>
<dbReference type="GeneID" id="28818721"/>
<dbReference type="KEGG" id="psco:LY89DRAFT_579296"/>
<dbReference type="OrthoDB" id="425354at2759"/>
<dbReference type="Proteomes" id="UP000070700">
    <property type="component" value="Unassembled WGS sequence"/>
</dbReference>
<dbReference type="GO" id="GO:0016853">
    <property type="term" value="F:isomerase activity"/>
    <property type="evidence" value="ECO:0007669"/>
    <property type="project" value="UniProtKB-KW"/>
</dbReference>
<dbReference type="InterPro" id="IPR053037">
    <property type="entry name" value="Pericyclase_pydY-like"/>
</dbReference>
<dbReference type="PANTHER" id="PTHR38115">
    <property type="entry name" value="LIPOCALIN-LIKE DOMAIN-CONTAINING PROTEIN"/>
    <property type="match status" value="1"/>
</dbReference>
<dbReference type="PANTHER" id="PTHR38115:SF1">
    <property type="entry name" value="LIPOCALIN-LIKE DOMAIN-CONTAINING PROTEIN"/>
    <property type="match status" value="1"/>
</dbReference>
<name>SCPY_MOLSC</name>
<evidence type="ECO:0000269" key="1">
    <source>
    </source>
</evidence>
<evidence type="ECO:0000303" key="2">
    <source>
    </source>
</evidence>
<evidence type="ECO:0000305" key="3"/>
<evidence type="ECO:0000305" key="4">
    <source>
    </source>
</evidence>
<keyword id="KW-0413">Isomerase</keyword>
<keyword id="KW-1185">Reference proteome</keyword>
<keyword id="KW-0843">Virulence</keyword>
<feature type="chain" id="PRO_0000458438" description="Probable pericyclase scpY">
    <location>
        <begin position="1"/>
        <end position="189"/>
    </location>
</feature>
<sequence>MTATPANVTLKDLNDQWAMNWKLCDDSEPMLVAQGVPWLVRKLLGLISMQVALKTVPDPATGLTHFFAEYKPPFGLPSSGEERVLDFVAEEITVPVFGTLRVSTRWATPKELDEIDAYLGEGFEKGTKEVIHMKTENSELGVVTHQTFGFEKIKGVRYHTRHIVVKRGGESTRLTLVYDYVGPQHAKKS</sequence>
<organism>
    <name type="scientific">Mollisia scopiformis</name>
    <name type="common">Conifer needle endophyte fungus</name>
    <name type="synonym">Phialocephala scopiformis</name>
    <dbReference type="NCBI Taxonomy" id="149040"/>
    <lineage>
        <taxon>Eukaryota</taxon>
        <taxon>Fungi</taxon>
        <taxon>Dikarya</taxon>
        <taxon>Ascomycota</taxon>
        <taxon>Pezizomycotina</taxon>
        <taxon>Leotiomycetes</taxon>
        <taxon>Helotiales</taxon>
        <taxon>Mollisiaceae</taxon>
        <taxon>Mollisia</taxon>
    </lineage>
</organism>
<proteinExistence type="inferred from homology"/>
<accession>A0A194XJX1</accession>
<reference key="1">
    <citation type="journal article" date="2016" name="Genome Announc.">
        <title>Full Genome of Phialocephala scopiformis DAOMC 229536, a Fungal Endophyte of Spruce Producing the Potent Anti-Insectan Compound Rugulosin.</title>
        <authorList>
            <person name="Walker A.K."/>
            <person name="Frasz S.L."/>
            <person name="Seifert K.A."/>
            <person name="Miller J.D."/>
            <person name="Mondo S.J."/>
            <person name="LaButti K."/>
            <person name="Lipzen A."/>
            <person name="Dockter R.B."/>
            <person name="Kennedy M.C."/>
            <person name="Grigoriev I.V."/>
            <person name="Spatafora J.W."/>
        </authorList>
    </citation>
    <scope>NUCLEOTIDE SEQUENCE [LARGE SCALE GENOMIC DNA]</scope>
    <source>
        <strain>DAOMC 229536 / CBS 120377 / 5WS22E1</strain>
    </source>
</reference>
<reference key="2">
    <citation type="journal article" date="2016" name="Genome Announc.">
        <title>Full Genome of Phialocephala scopiformis DAOMC 229536, a Fungal Endophyte of Spruce Producing the Potent Anti-Insectan Compound Rugulosin.</title>
        <authorList>
            <person name="Walker A.K."/>
            <person name="Frasz S.L."/>
            <person name="Seifert K.A."/>
            <person name="Miller J.D."/>
            <person name="Mondo S.J."/>
            <person name="LaButti K."/>
            <person name="Lipzen A."/>
            <person name="Dockter R.B."/>
            <person name="Kennedy M.C."/>
            <person name="Grigoriev I.V."/>
            <person name="Spatafora J.W."/>
        </authorList>
    </citation>
    <scope>ERRATUM OF PUBMED:26950333</scope>
</reference>
<reference key="3">
    <citation type="journal article" date="2021" name="J. Am. Chem. Soc.">
        <title>Biosynthesis of para-cyclophane-containing hirsutellone family of fungal natural products.</title>
        <authorList>
            <person name="Ohashi M."/>
            <person name="Kakule T.B."/>
            <person name="Tang M.C."/>
            <person name="Jamieson C.S."/>
            <person name="Liu M."/>
            <person name="Zhao Y.L."/>
            <person name="Houk K.N."/>
            <person name="Tang Y."/>
        </authorList>
    </citation>
    <scope>IDENTIFICATION</scope>
    <scope>FUNCTION</scope>
</reference>
<comment type="function">
    <text evidence="4">Probable pericyclase; part of the gene scp cluster that mediates the biosynthesis of a hirsutellone-like compound that has still to be identified.</text>
</comment>
<comment type="pathway">
    <text evidence="4">Mycotoxin biosynthesis.</text>
</comment>
<comment type="similarity">
    <text evidence="3">Belongs to the pericyclase pydY family.</text>
</comment>
<protein>
    <recommendedName>
        <fullName evidence="2">Probable pericyclase scpY</fullName>
        <ecNumber evidence="1">5.-.-.-</ecNumber>
    </recommendedName>
    <alternativeName>
        <fullName evidence="2">Scp cluster protein Y</fullName>
    </alternativeName>
</protein>